<gene>
    <name evidence="1" type="primary">coaD</name>
    <name type="ordered locus">Sala_2193</name>
</gene>
<feature type="chain" id="PRO_1000076792" description="Phosphopantetheine adenylyltransferase">
    <location>
        <begin position="1"/>
        <end position="168"/>
    </location>
</feature>
<feature type="binding site" evidence="1">
    <location>
        <begin position="9"/>
        <end position="10"/>
    </location>
    <ligand>
        <name>ATP</name>
        <dbReference type="ChEBI" id="CHEBI:30616"/>
    </ligand>
</feature>
<feature type="binding site" evidence="1">
    <location>
        <position position="9"/>
    </location>
    <ligand>
        <name>substrate</name>
    </ligand>
</feature>
<feature type="binding site" evidence="1">
    <location>
        <position position="17"/>
    </location>
    <ligand>
        <name>ATP</name>
        <dbReference type="ChEBI" id="CHEBI:30616"/>
    </ligand>
</feature>
<feature type="binding site" evidence="1">
    <location>
        <position position="41"/>
    </location>
    <ligand>
        <name>substrate</name>
    </ligand>
</feature>
<feature type="binding site" evidence="1">
    <location>
        <position position="74"/>
    </location>
    <ligand>
        <name>substrate</name>
    </ligand>
</feature>
<feature type="binding site" evidence="1">
    <location>
        <position position="88"/>
    </location>
    <ligand>
        <name>substrate</name>
    </ligand>
</feature>
<feature type="binding site" evidence="1">
    <location>
        <begin position="89"/>
        <end position="91"/>
    </location>
    <ligand>
        <name>ATP</name>
        <dbReference type="ChEBI" id="CHEBI:30616"/>
    </ligand>
</feature>
<feature type="binding site" evidence="1">
    <location>
        <position position="99"/>
    </location>
    <ligand>
        <name>ATP</name>
        <dbReference type="ChEBI" id="CHEBI:30616"/>
    </ligand>
</feature>
<feature type="binding site" evidence="1">
    <location>
        <begin position="124"/>
        <end position="130"/>
    </location>
    <ligand>
        <name>ATP</name>
        <dbReference type="ChEBI" id="CHEBI:30616"/>
    </ligand>
</feature>
<feature type="site" description="Transition state stabilizer" evidence="1">
    <location>
        <position position="17"/>
    </location>
</feature>
<protein>
    <recommendedName>
        <fullName evidence="1">Phosphopantetheine adenylyltransferase</fullName>
        <ecNumber evidence="1">2.7.7.3</ecNumber>
    </recommendedName>
    <alternativeName>
        <fullName evidence="1">Dephospho-CoA pyrophosphorylase</fullName>
    </alternativeName>
    <alternativeName>
        <fullName evidence="1">Pantetheine-phosphate adenylyltransferase</fullName>
        <shortName evidence="1">PPAT</shortName>
    </alternativeName>
</protein>
<organism>
    <name type="scientific">Sphingopyxis alaskensis (strain DSM 13593 / LMG 18877 / RB2256)</name>
    <name type="common">Sphingomonas alaskensis</name>
    <dbReference type="NCBI Taxonomy" id="317655"/>
    <lineage>
        <taxon>Bacteria</taxon>
        <taxon>Pseudomonadati</taxon>
        <taxon>Pseudomonadota</taxon>
        <taxon>Alphaproteobacteria</taxon>
        <taxon>Sphingomonadales</taxon>
        <taxon>Sphingomonadaceae</taxon>
        <taxon>Sphingopyxis</taxon>
    </lineage>
</organism>
<reference key="1">
    <citation type="journal article" date="2009" name="Proc. Natl. Acad. Sci. U.S.A.">
        <title>The genomic basis of trophic strategy in marine bacteria.</title>
        <authorList>
            <person name="Lauro F.M."/>
            <person name="McDougald D."/>
            <person name="Thomas T."/>
            <person name="Williams T.J."/>
            <person name="Egan S."/>
            <person name="Rice S."/>
            <person name="DeMaere M.Z."/>
            <person name="Ting L."/>
            <person name="Ertan H."/>
            <person name="Johnson J."/>
            <person name="Ferriera S."/>
            <person name="Lapidus A."/>
            <person name="Anderson I."/>
            <person name="Kyrpides N."/>
            <person name="Munk A.C."/>
            <person name="Detter C."/>
            <person name="Han C.S."/>
            <person name="Brown M.V."/>
            <person name="Robb F.T."/>
            <person name="Kjelleberg S."/>
            <person name="Cavicchioli R."/>
        </authorList>
    </citation>
    <scope>NUCLEOTIDE SEQUENCE [LARGE SCALE GENOMIC DNA]</scope>
    <source>
        <strain>DSM 13593 / LMG 18877 / RB2256</strain>
    </source>
</reference>
<evidence type="ECO:0000255" key="1">
    <source>
        <dbReference type="HAMAP-Rule" id="MF_00151"/>
    </source>
</evidence>
<keyword id="KW-0067">ATP-binding</keyword>
<keyword id="KW-0173">Coenzyme A biosynthesis</keyword>
<keyword id="KW-0963">Cytoplasm</keyword>
<keyword id="KW-0460">Magnesium</keyword>
<keyword id="KW-0547">Nucleotide-binding</keyword>
<keyword id="KW-0548">Nucleotidyltransferase</keyword>
<keyword id="KW-1185">Reference proteome</keyword>
<keyword id="KW-0808">Transferase</keyword>
<sequence length="168" mass="18634">MRVGVYPGTFDPITLGHMDIIRRGAKLVDRLVIGVTTNITKSPLFDDDERIAMVKREVAAIEGDIQVVGFNSLLMDFAQREGATVIVRGLRAVADFEYEYQMAGMNQQLNDRIETVFLMADVGLQPIASRLVKEIAIFGGEIHKFVTPAVCKAVIARIAERGLRQGER</sequence>
<proteinExistence type="inferred from homology"/>
<accession>Q1GR20</accession>
<comment type="function">
    <text evidence="1">Reversibly transfers an adenylyl group from ATP to 4'-phosphopantetheine, yielding dephospho-CoA (dPCoA) and pyrophosphate.</text>
</comment>
<comment type="catalytic activity">
    <reaction evidence="1">
        <text>(R)-4'-phosphopantetheine + ATP + H(+) = 3'-dephospho-CoA + diphosphate</text>
        <dbReference type="Rhea" id="RHEA:19801"/>
        <dbReference type="ChEBI" id="CHEBI:15378"/>
        <dbReference type="ChEBI" id="CHEBI:30616"/>
        <dbReference type="ChEBI" id="CHEBI:33019"/>
        <dbReference type="ChEBI" id="CHEBI:57328"/>
        <dbReference type="ChEBI" id="CHEBI:61723"/>
        <dbReference type="EC" id="2.7.7.3"/>
    </reaction>
</comment>
<comment type="cofactor">
    <cofactor evidence="1">
        <name>Mg(2+)</name>
        <dbReference type="ChEBI" id="CHEBI:18420"/>
    </cofactor>
</comment>
<comment type="pathway">
    <text evidence="1">Cofactor biosynthesis; coenzyme A biosynthesis; CoA from (R)-pantothenate: step 4/5.</text>
</comment>
<comment type="subunit">
    <text evidence="1">Homohexamer.</text>
</comment>
<comment type="subcellular location">
    <subcellularLocation>
        <location evidence="1">Cytoplasm</location>
    </subcellularLocation>
</comment>
<comment type="similarity">
    <text evidence="1">Belongs to the bacterial CoaD family.</text>
</comment>
<name>COAD_SPHAL</name>
<dbReference type="EC" id="2.7.7.3" evidence="1"/>
<dbReference type="EMBL" id="CP000356">
    <property type="protein sequence ID" value="ABF53902.1"/>
    <property type="molecule type" value="Genomic_DNA"/>
</dbReference>
<dbReference type="RefSeq" id="WP_011542478.1">
    <property type="nucleotide sequence ID" value="NC_008048.1"/>
</dbReference>
<dbReference type="SMR" id="Q1GR20"/>
<dbReference type="STRING" id="317655.Sala_2193"/>
<dbReference type="KEGG" id="sal:Sala_2193"/>
<dbReference type="eggNOG" id="COG0669">
    <property type="taxonomic scope" value="Bacteria"/>
</dbReference>
<dbReference type="HOGENOM" id="CLU_100149_0_1_5"/>
<dbReference type="OrthoDB" id="9806661at2"/>
<dbReference type="UniPathway" id="UPA00241">
    <property type="reaction ID" value="UER00355"/>
</dbReference>
<dbReference type="Proteomes" id="UP000006578">
    <property type="component" value="Chromosome"/>
</dbReference>
<dbReference type="GO" id="GO:0005737">
    <property type="term" value="C:cytoplasm"/>
    <property type="evidence" value="ECO:0007669"/>
    <property type="project" value="UniProtKB-SubCell"/>
</dbReference>
<dbReference type="GO" id="GO:0005524">
    <property type="term" value="F:ATP binding"/>
    <property type="evidence" value="ECO:0007669"/>
    <property type="project" value="UniProtKB-KW"/>
</dbReference>
<dbReference type="GO" id="GO:0004595">
    <property type="term" value="F:pantetheine-phosphate adenylyltransferase activity"/>
    <property type="evidence" value="ECO:0007669"/>
    <property type="project" value="UniProtKB-UniRule"/>
</dbReference>
<dbReference type="GO" id="GO:0015937">
    <property type="term" value="P:coenzyme A biosynthetic process"/>
    <property type="evidence" value="ECO:0007669"/>
    <property type="project" value="UniProtKB-UniRule"/>
</dbReference>
<dbReference type="CDD" id="cd02163">
    <property type="entry name" value="PPAT"/>
    <property type="match status" value="1"/>
</dbReference>
<dbReference type="Gene3D" id="3.40.50.620">
    <property type="entry name" value="HUPs"/>
    <property type="match status" value="1"/>
</dbReference>
<dbReference type="HAMAP" id="MF_00151">
    <property type="entry name" value="PPAT_bact"/>
    <property type="match status" value="1"/>
</dbReference>
<dbReference type="InterPro" id="IPR004821">
    <property type="entry name" value="Cyt_trans-like"/>
</dbReference>
<dbReference type="InterPro" id="IPR001980">
    <property type="entry name" value="PPAT"/>
</dbReference>
<dbReference type="InterPro" id="IPR014729">
    <property type="entry name" value="Rossmann-like_a/b/a_fold"/>
</dbReference>
<dbReference type="NCBIfam" id="TIGR01510">
    <property type="entry name" value="coaD_prev_kdtB"/>
    <property type="match status" value="1"/>
</dbReference>
<dbReference type="NCBIfam" id="TIGR00125">
    <property type="entry name" value="cyt_tran_rel"/>
    <property type="match status" value="1"/>
</dbReference>
<dbReference type="PANTHER" id="PTHR21342">
    <property type="entry name" value="PHOSPHOPANTETHEINE ADENYLYLTRANSFERASE"/>
    <property type="match status" value="1"/>
</dbReference>
<dbReference type="PANTHER" id="PTHR21342:SF1">
    <property type="entry name" value="PHOSPHOPANTETHEINE ADENYLYLTRANSFERASE"/>
    <property type="match status" value="1"/>
</dbReference>
<dbReference type="Pfam" id="PF01467">
    <property type="entry name" value="CTP_transf_like"/>
    <property type="match status" value="1"/>
</dbReference>
<dbReference type="PRINTS" id="PR01020">
    <property type="entry name" value="LPSBIOSNTHSS"/>
</dbReference>
<dbReference type="SUPFAM" id="SSF52374">
    <property type="entry name" value="Nucleotidylyl transferase"/>
    <property type="match status" value="1"/>
</dbReference>